<gene>
    <name evidence="1" type="primary">hutG</name>
    <name type="ordered locus">GK1365</name>
</gene>
<protein>
    <recommendedName>
        <fullName evidence="1">Formimidoylglutamase</fullName>
        <ecNumber evidence="1">3.5.3.8</ecNumber>
    </recommendedName>
    <alternativeName>
        <fullName evidence="1">Formiminoglutamase</fullName>
    </alternativeName>
    <alternativeName>
        <fullName evidence="1">Formiminoglutamate hydrolase</fullName>
    </alternativeName>
</protein>
<name>HUTG_GEOKA</name>
<accession>Q5L086</accession>
<proteinExistence type="inferred from homology"/>
<evidence type="ECO:0000255" key="1">
    <source>
        <dbReference type="HAMAP-Rule" id="MF_00737"/>
    </source>
</evidence>
<keyword id="KW-0369">Histidine metabolism</keyword>
<keyword id="KW-0378">Hydrolase</keyword>
<keyword id="KW-0464">Manganese</keyword>
<keyword id="KW-0479">Metal-binding</keyword>
<keyword id="KW-1185">Reference proteome</keyword>
<comment type="function">
    <text evidence="1">Catalyzes the conversion of N-formimidoyl-L-glutamate to L-glutamate and formamide.</text>
</comment>
<comment type="catalytic activity">
    <reaction evidence="1">
        <text>N-formimidoyl-L-glutamate + H2O = formamide + L-glutamate</text>
        <dbReference type="Rhea" id="RHEA:22492"/>
        <dbReference type="ChEBI" id="CHEBI:15377"/>
        <dbReference type="ChEBI" id="CHEBI:16397"/>
        <dbReference type="ChEBI" id="CHEBI:29985"/>
        <dbReference type="ChEBI" id="CHEBI:58928"/>
        <dbReference type="EC" id="3.5.3.8"/>
    </reaction>
</comment>
<comment type="cofactor">
    <cofactor evidence="1">
        <name>Mn(2+)</name>
        <dbReference type="ChEBI" id="CHEBI:29035"/>
    </cofactor>
    <text evidence="1">Binds 2 manganese ions per subunit.</text>
</comment>
<comment type="pathway">
    <text evidence="1">Amino-acid degradation; L-histidine degradation into L-glutamate; L-glutamate from N-formimidoyl-L-glutamate (hydrolase route): step 1/1.</text>
</comment>
<comment type="similarity">
    <text evidence="1">Belongs to the arginase family.</text>
</comment>
<organism>
    <name type="scientific">Geobacillus kaustophilus (strain HTA426)</name>
    <dbReference type="NCBI Taxonomy" id="235909"/>
    <lineage>
        <taxon>Bacteria</taxon>
        <taxon>Bacillati</taxon>
        <taxon>Bacillota</taxon>
        <taxon>Bacilli</taxon>
        <taxon>Bacillales</taxon>
        <taxon>Anoxybacillaceae</taxon>
        <taxon>Geobacillus</taxon>
        <taxon>Geobacillus thermoleovorans group</taxon>
    </lineage>
</organism>
<dbReference type="EC" id="3.5.3.8" evidence="1"/>
<dbReference type="EMBL" id="BA000043">
    <property type="protein sequence ID" value="BAD75650.1"/>
    <property type="molecule type" value="Genomic_DNA"/>
</dbReference>
<dbReference type="RefSeq" id="WP_011230862.1">
    <property type="nucleotide sequence ID" value="NC_006510.1"/>
</dbReference>
<dbReference type="SMR" id="Q5L086"/>
<dbReference type="STRING" id="235909.GK1365"/>
<dbReference type="KEGG" id="gka:GK1365"/>
<dbReference type="PATRIC" id="fig|235909.7.peg.1475"/>
<dbReference type="eggNOG" id="COG0010">
    <property type="taxonomic scope" value="Bacteria"/>
</dbReference>
<dbReference type="HOGENOM" id="CLU_039478_2_0_9"/>
<dbReference type="UniPathway" id="UPA00379">
    <property type="reaction ID" value="UER00552"/>
</dbReference>
<dbReference type="Proteomes" id="UP000001172">
    <property type="component" value="Chromosome"/>
</dbReference>
<dbReference type="GO" id="GO:0008783">
    <property type="term" value="F:agmatinase activity"/>
    <property type="evidence" value="ECO:0007669"/>
    <property type="project" value="TreeGrafter"/>
</dbReference>
<dbReference type="GO" id="GO:0050415">
    <property type="term" value="F:formimidoylglutamase activity"/>
    <property type="evidence" value="ECO:0007669"/>
    <property type="project" value="UniProtKB-UniRule"/>
</dbReference>
<dbReference type="GO" id="GO:0030145">
    <property type="term" value="F:manganese ion binding"/>
    <property type="evidence" value="ECO:0007669"/>
    <property type="project" value="UniProtKB-UniRule"/>
</dbReference>
<dbReference type="GO" id="GO:0019556">
    <property type="term" value="P:L-histidine catabolic process to glutamate and formamide"/>
    <property type="evidence" value="ECO:0007669"/>
    <property type="project" value="UniProtKB-UniPathway"/>
</dbReference>
<dbReference type="GO" id="GO:0019557">
    <property type="term" value="P:L-histidine catabolic process to glutamate and formate"/>
    <property type="evidence" value="ECO:0007669"/>
    <property type="project" value="UniProtKB-UniPathway"/>
</dbReference>
<dbReference type="GO" id="GO:0033389">
    <property type="term" value="P:putrescine biosynthetic process from arginine, via agmatine"/>
    <property type="evidence" value="ECO:0007669"/>
    <property type="project" value="TreeGrafter"/>
</dbReference>
<dbReference type="CDD" id="cd09988">
    <property type="entry name" value="Formimidoylglutamase"/>
    <property type="match status" value="1"/>
</dbReference>
<dbReference type="Gene3D" id="3.40.800.10">
    <property type="entry name" value="Ureohydrolase domain"/>
    <property type="match status" value="1"/>
</dbReference>
<dbReference type="HAMAP" id="MF_00737">
    <property type="entry name" value="Formimidoylglutam"/>
    <property type="match status" value="1"/>
</dbReference>
<dbReference type="InterPro" id="IPR005923">
    <property type="entry name" value="HutG"/>
</dbReference>
<dbReference type="InterPro" id="IPR006035">
    <property type="entry name" value="Ureohydrolase"/>
</dbReference>
<dbReference type="InterPro" id="IPR023696">
    <property type="entry name" value="Ureohydrolase_dom_sf"/>
</dbReference>
<dbReference type="NCBIfam" id="TIGR01227">
    <property type="entry name" value="hutG"/>
    <property type="match status" value="1"/>
</dbReference>
<dbReference type="PANTHER" id="PTHR11358">
    <property type="entry name" value="ARGINASE/AGMATINASE"/>
    <property type="match status" value="1"/>
</dbReference>
<dbReference type="PANTHER" id="PTHR11358:SF35">
    <property type="entry name" value="FORMIMIDOYLGLUTAMASE"/>
    <property type="match status" value="1"/>
</dbReference>
<dbReference type="Pfam" id="PF00491">
    <property type="entry name" value="Arginase"/>
    <property type="match status" value="1"/>
</dbReference>
<dbReference type="PIRSF" id="PIRSF036979">
    <property type="entry name" value="Arginase"/>
    <property type="match status" value="1"/>
</dbReference>
<dbReference type="SUPFAM" id="SSF52768">
    <property type="entry name" value="Arginase/deacetylase"/>
    <property type="match status" value="1"/>
</dbReference>
<dbReference type="PROSITE" id="PS51409">
    <property type="entry name" value="ARGINASE_2"/>
    <property type="match status" value="1"/>
</dbReference>
<reference key="1">
    <citation type="journal article" date="2004" name="Nucleic Acids Res.">
        <title>Thermoadaptation trait revealed by the genome sequence of thermophilic Geobacillus kaustophilus.</title>
        <authorList>
            <person name="Takami H."/>
            <person name="Takaki Y."/>
            <person name="Chee G.-J."/>
            <person name="Nishi S."/>
            <person name="Shimamura S."/>
            <person name="Suzuki H."/>
            <person name="Matsui S."/>
            <person name="Uchiyama I."/>
        </authorList>
    </citation>
    <scope>NUCLEOTIDE SEQUENCE [LARGE SCALE GENOMIC DNA]</scope>
    <source>
        <strain>HTA426</strain>
    </source>
</reference>
<feature type="chain" id="PRO_0000173755" description="Formimidoylglutamase">
    <location>
        <begin position="1"/>
        <end position="323"/>
    </location>
</feature>
<feature type="binding site" evidence="1">
    <location>
        <position position="131"/>
    </location>
    <ligand>
        <name>Mn(2+)</name>
        <dbReference type="ChEBI" id="CHEBI:29035"/>
        <label>1</label>
    </ligand>
</feature>
<feature type="binding site" evidence="1">
    <location>
        <position position="157"/>
    </location>
    <ligand>
        <name>Mn(2+)</name>
        <dbReference type="ChEBI" id="CHEBI:29035"/>
        <label>1</label>
    </ligand>
</feature>
<feature type="binding site" evidence="1">
    <location>
        <position position="157"/>
    </location>
    <ligand>
        <name>Mn(2+)</name>
        <dbReference type="ChEBI" id="CHEBI:29035"/>
        <label>2</label>
    </ligand>
</feature>
<feature type="binding site" evidence="1">
    <location>
        <position position="159"/>
    </location>
    <ligand>
        <name>Mn(2+)</name>
        <dbReference type="ChEBI" id="CHEBI:29035"/>
        <label>2</label>
    </ligand>
</feature>
<feature type="binding site" evidence="1">
    <location>
        <position position="161"/>
    </location>
    <ligand>
        <name>Mn(2+)</name>
        <dbReference type="ChEBI" id="CHEBI:29035"/>
        <label>1</label>
    </ligand>
</feature>
<feature type="binding site" evidence="1">
    <location>
        <position position="245"/>
    </location>
    <ligand>
        <name>Mn(2+)</name>
        <dbReference type="ChEBI" id="CHEBI:29035"/>
        <label>1</label>
    </ligand>
</feature>
<feature type="binding site" evidence="1">
    <location>
        <position position="245"/>
    </location>
    <ligand>
        <name>Mn(2+)</name>
        <dbReference type="ChEBI" id="CHEBI:29035"/>
        <label>2</label>
    </ligand>
</feature>
<feature type="binding site" evidence="1">
    <location>
        <position position="247"/>
    </location>
    <ligand>
        <name>Mn(2+)</name>
        <dbReference type="ChEBI" id="CHEBI:29035"/>
        <label>2</label>
    </ligand>
</feature>
<sequence length="323" mass="35203">MYQPPDAGHWTGRIDSVKDERAFRLHQRIRLLDLSQPLETAAERAAAFIGFACDEGVRRNQGRQGAKEAPAAVKAALARLPWHLPEGVVVYDAGDVVCIDERLEQSQTELGKAVARLLKNGMASIVIGGGHETAYGHYLGVREALGTDARLGILNIDAHFDLRPYDDGPTSGTMFRQILDQDDQVSYFCLGIQRLGNTAALFADAETYRCRYMLEDELTAGPIEAAYEQIEKFAADHDAVMLTFCMDAISAAAAPGVSAPSPFGLAPSLARALIRRIVSHPKTISVDLCEVNPLLDEGGKTVALAAAFCMEALLHFQRLQPRR</sequence>